<evidence type="ECO:0000255" key="1">
    <source>
        <dbReference type="HAMAP-Rule" id="MF_00709"/>
    </source>
</evidence>
<comment type="function">
    <text evidence="1">Two distinct, membrane-bound, FAD-containing enzymes are responsible for the catalysis of fumarate and succinate interconversion; fumarate reductase is used in anaerobic growth, and succinate dehydrogenase is used in aerobic growth. Anchors the catalytic components of the fumarate reductase complex to the cell inner membrane, binds quinones.</text>
</comment>
<comment type="subunit">
    <text evidence="1">Part of an enzyme complex containing four subunits: a flavoprotein (FrdA), an iron-sulfur protein (FrdB), and two hydrophobic anchor proteins (FrdC and FrdD).</text>
</comment>
<comment type="subcellular location">
    <subcellularLocation>
        <location evidence="1">Cell inner membrane</location>
        <topology evidence="1">Multi-pass membrane protein</topology>
    </subcellularLocation>
</comment>
<comment type="similarity">
    <text evidence="1">Belongs to the FrdD family.</text>
</comment>
<feature type="chain" id="PRO_1000062070" description="Fumarate reductase subunit D">
    <location>
        <begin position="1"/>
        <end position="119"/>
    </location>
</feature>
<feature type="transmembrane region" description="Helical" evidence="1">
    <location>
        <begin position="26"/>
        <end position="46"/>
    </location>
</feature>
<feature type="transmembrane region" description="Helical" evidence="1">
    <location>
        <begin position="58"/>
        <end position="78"/>
    </location>
</feature>
<feature type="transmembrane region" description="Helical" evidence="1">
    <location>
        <begin position="99"/>
        <end position="119"/>
    </location>
</feature>
<protein>
    <recommendedName>
        <fullName evidence="1">Fumarate reductase subunit D</fullName>
    </recommendedName>
    <alternativeName>
        <fullName evidence="1">Fumarate reductase 13 kDa hydrophobic protein</fullName>
    </alternativeName>
    <alternativeName>
        <fullName evidence="1">Quinol-fumarate reductase subunit D</fullName>
        <shortName evidence="1">QFR subunit D</shortName>
    </alternativeName>
</protein>
<accession>A4W5P8</accession>
<dbReference type="EMBL" id="CP000653">
    <property type="protein sequence ID" value="ABP59028.1"/>
    <property type="molecule type" value="Genomic_DNA"/>
</dbReference>
<dbReference type="RefSeq" id="WP_011915601.1">
    <property type="nucleotide sequence ID" value="NC_009436.1"/>
</dbReference>
<dbReference type="SMR" id="A4W5P8"/>
<dbReference type="STRING" id="399742.Ent638_0340"/>
<dbReference type="GeneID" id="93307519"/>
<dbReference type="KEGG" id="ent:Ent638_0340"/>
<dbReference type="eggNOG" id="COG3080">
    <property type="taxonomic scope" value="Bacteria"/>
</dbReference>
<dbReference type="HOGENOM" id="CLU_168367_0_0_6"/>
<dbReference type="OrthoDB" id="9804636at2"/>
<dbReference type="Proteomes" id="UP000000230">
    <property type="component" value="Chromosome"/>
</dbReference>
<dbReference type="GO" id="GO:0045283">
    <property type="term" value="C:fumarate reductase complex"/>
    <property type="evidence" value="ECO:0007669"/>
    <property type="project" value="UniProtKB-UniRule"/>
</dbReference>
<dbReference type="GO" id="GO:0005886">
    <property type="term" value="C:plasma membrane"/>
    <property type="evidence" value="ECO:0007669"/>
    <property type="project" value="UniProtKB-SubCell"/>
</dbReference>
<dbReference type="GO" id="GO:0000104">
    <property type="term" value="F:succinate dehydrogenase activity"/>
    <property type="evidence" value="ECO:0007669"/>
    <property type="project" value="UniProtKB-UniRule"/>
</dbReference>
<dbReference type="GO" id="GO:0006106">
    <property type="term" value="P:fumarate metabolic process"/>
    <property type="evidence" value="ECO:0007669"/>
    <property type="project" value="InterPro"/>
</dbReference>
<dbReference type="CDD" id="cd00547">
    <property type="entry name" value="QFR_TypeD_subunitD"/>
    <property type="match status" value="1"/>
</dbReference>
<dbReference type="FunFam" id="1.20.1300.10:FF:000002">
    <property type="entry name" value="Fumarate reductase subunit D"/>
    <property type="match status" value="1"/>
</dbReference>
<dbReference type="Gene3D" id="1.20.1300.10">
    <property type="entry name" value="Fumarate reductase/succinate dehydrogenase, transmembrane subunit"/>
    <property type="match status" value="1"/>
</dbReference>
<dbReference type="HAMAP" id="MF_00709">
    <property type="entry name" value="Fumarate_red_D"/>
    <property type="match status" value="1"/>
</dbReference>
<dbReference type="InterPro" id="IPR003418">
    <property type="entry name" value="Fumarate_red_D"/>
</dbReference>
<dbReference type="InterPro" id="IPR034804">
    <property type="entry name" value="SQR/QFR_C/D"/>
</dbReference>
<dbReference type="NCBIfam" id="NF003977">
    <property type="entry name" value="PRK05470.1-1"/>
    <property type="match status" value="1"/>
</dbReference>
<dbReference type="Pfam" id="PF02313">
    <property type="entry name" value="Fumarate_red_D"/>
    <property type="match status" value="1"/>
</dbReference>
<dbReference type="PIRSF" id="PIRSF000179">
    <property type="entry name" value="FrdD"/>
    <property type="match status" value="1"/>
</dbReference>
<dbReference type="SUPFAM" id="SSF81343">
    <property type="entry name" value="Fumarate reductase respiratory complex transmembrane subunits"/>
    <property type="match status" value="1"/>
</dbReference>
<reference key="1">
    <citation type="journal article" date="2010" name="PLoS Genet.">
        <title>Genome sequence of the plant growth promoting endophytic bacterium Enterobacter sp. 638.</title>
        <authorList>
            <person name="Taghavi S."/>
            <person name="van der Lelie D."/>
            <person name="Hoffman A."/>
            <person name="Zhang Y.B."/>
            <person name="Walla M.D."/>
            <person name="Vangronsveld J."/>
            <person name="Newman L."/>
            <person name="Monchy S."/>
        </authorList>
    </citation>
    <scope>NUCLEOTIDE SEQUENCE [LARGE SCALE GENOMIC DNA]</scope>
    <source>
        <strain>638</strain>
    </source>
</reference>
<keyword id="KW-0997">Cell inner membrane</keyword>
<keyword id="KW-1003">Cell membrane</keyword>
<keyword id="KW-0472">Membrane</keyword>
<keyword id="KW-0812">Transmembrane</keyword>
<keyword id="KW-1133">Transmembrane helix</keyword>
<gene>
    <name evidence="1" type="primary">frdD</name>
    <name type="ordered locus">Ent638_0340</name>
</gene>
<sequence>MINPNPKRSDEPVFWGLFGAGGMWSAIVAPVIILLVAILLPLGLFPGEALGYERVLAFASSFIGRVFIFLMIVLPLWLGLHRIHHAMHDLKIHVPNGKWVFYGLATILTVVTLVAIVTI</sequence>
<proteinExistence type="inferred from homology"/>
<organism>
    <name type="scientific">Enterobacter sp. (strain 638)</name>
    <dbReference type="NCBI Taxonomy" id="399742"/>
    <lineage>
        <taxon>Bacteria</taxon>
        <taxon>Pseudomonadati</taxon>
        <taxon>Pseudomonadota</taxon>
        <taxon>Gammaproteobacteria</taxon>
        <taxon>Enterobacterales</taxon>
        <taxon>Enterobacteriaceae</taxon>
        <taxon>Enterobacter</taxon>
    </lineage>
</organism>
<name>FRDD_ENT38</name>